<feature type="chain" id="PRO_0000203209" description="Putative uncharacterized protein YKR040C">
    <location>
        <begin position="1"/>
        <end position="167"/>
    </location>
</feature>
<feature type="region of interest" description="Disordered" evidence="1">
    <location>
        <begin position="140"/>
        <end position="167"/>
    </location>
</feature>
<feature type="compositionally biased region" description="Basic residues" evidence="1">
    <location>
        <begin position="145"/>
        <end position="154"/>
    </location>
</feature>
<proteinExistence type="uncertain"/>
<accession>P36133</accession>
<protein>
    <recommendedName>
        <fullName>Putative uncharacterized protein YKR040C</fullName>
    </recommendedName>
</protein>
<name>YK20_YEAST</name>
<reference key="1">
    <citation type="journal article" date="1994" name="Nature">
        <title>Complete DNA sequence of yeast chromosome XI.</title>
        <authorList>
            <person name="Dujon B."/>
            <person name="Alexandraki D."/>
            <person name="Andre B."/>
            <person name="Ansorge W."/>
            <person name="Baladron V."/>
            <person name="Ballesta J.P.G."/>
            <person name="Banrevi A."/>
            <person name="Bolle P.-A."/>
            <person name="Bolotin-Fukuhara M."/>
            <person name="Bossier P."/>
            <person name="Bou G."/>
            <person name="Boyer J."/>
            <person name="Buitrago M.J."/>
            <person name="Cheret G."/>
            <person name="Colleaux L."/>
            <person name="Daignan-Fornier B."/>
            <person name="del Rey F."/>
            <person name="Dion C."/>
            <person name="Domdey H."/>
            <person name="Duesterhoeft A."/>
            <person name="Duesterhus S."/>
            <person name="Entian K.-D."/>
            <person name="Erfle H."/>
            <person name="Esteban P.F."/>
            <person name="Feldmann H."/>
            <person name="Fernandes L."/>
            <person name="Fobo G.M."/>
            <person name="Fritz C."/>
            <person name="Fukuhara H."/>
            <person name="Gabel C."/>
            <person name="Gaillon L."/>
            <person name="Garcia-Cantalejo J.M."/>
            <person name="Garcia-Ramirez J.J."/>
            <person name="Gent M.E."/>
            <person name="Ghazvini M."/>
            <person name="Goffeau A."/>
            <person name="Gonzalez A."/>
            <person name="Grothues D."/>
            <person name="Guerreiro P."/>
            <person name="Hegemann J.H."/>
            <person name="Hewitt N."/>
            <person name="Hilger F."/>
            <person name="Hollenberg C.P."/>
            <person name="Horaitis O."/>
            <person name="Indge K.J."/>
            <person name="Jacquier A."/>
            <person name="James C.M."/>
            <person name="Jauniaux J.-C."/>
            <person name="Jimenez A."/>
            <person name="Keuchel H."/>
            <person name="Kirchrath L."/>
            <person name="Kleine K."/>
            <person name="Koetter P."/>
            <person name="Legrain P."/>
            <person name="Liebl S."/>
            <person name="Louis E.J."/>
            <person name="Maia e Silva A."/>
            <person name="Marck C."/>
            <person name="Monnier A.-L."/>
            <person name="Moestl D."/>
            <person name="Mueller S."/>
            <person name="Obermaier B."/>
            <person name="Oliver S.G."/>
            <person name="Pallier C."/>
            <person name="Pascolo S."/>
            <person name="Pfeiffer F."/>
            <person name="Philippsen P."/>
            <person name="Planta R.J."/>
            <person name="Pohl F.M."/>
            <person name="Pohl T.M."/>
            <person name="Poehlmann R."/>
            <person name="Portetelle D."/>
            <person name="Purnelle B."/>
            <person name="Puzos V."/>
            <person name="Ramezani Rad M."/>
            <person name="Rasmussen S.W."/>
            <person name="Remacha M.A."/>
            <person name="Revuelta J.L."/>
            <person name="Richard G.-F."/>
            <person name="Rieger M."/>
            <person name="Rodrigues-Pousada C."/>
            <person name="Rose M."/>
            <person name="Rupp T."/>
            <person name="Santos M.A."/>
            <person name="Schwager C."/>
            <person name="Sensen C."/>
            <person name="Skala J."/>
            <person name="Soares H."/>
            <person name="Sor F."/>
            <person name="Stegemann J."/>
            <person name="Tettelin H."/>
            <person name="Thierry A."/>
            <person name="Tzermia M."/>
            <person name="Urrestarazu L.A."/>
            <person name="van Dyck L."/>
            <person name="van Vliet-Reedijk J.C."/>
            <person name="Valens M."/>
            <person name="Vandenbol M."/>
            <person name="Vilela C."/>
            <person name="Vissers S."/>
            <person name="von Wettstein D."/>
            <person name="Voss H."/>
            <person name="Wiemann S."/>
            <person name="Xu G."/>
            <person name="Zimmermann J."/>
            <person name="Haasemann M."/>
            <person name="Becker I."/>
            <person name="Mewes H.-W."/>
        </authorList>
    </citation>
    <scope>NUCLEOTIDE SEQUENCE [LARGE SCALE GENOMIC DNA]</scope>
    <source>
        <strain>ATCC 204508 / S288c</strain>
    </source>
</reference>
<reference key="2">
    <citation type="journal article" date="2014" name="G3 (Bethesda)">
        <title>The reference genome sequence of Saccharomyces cerevisiae: Then and now.</title>
        <authorList>
            <person name="Engel S.R."/>
            <person name="Dietrich F.S."/>
            <person name="Fisk D.G."/>
            <person name="Binkley G."/>
            <person name="Balakrishnan R."/>
            <person name="Costanzo M.C."/>
            <person name="Dwight S.S."/>
            <person name="Hitz B.C."/>
            <person name="Karra K."/>
            <person name="Nash R.S."/>
            <person name="Weng S."/>
            <person name="Wong E.D."/>
            <person name="Lloyd P."/>
            <person name="Skrzypek M.S."/>
            <person name="Miyasato S.R."/>
            <person name="Simison M."/>
            <person name="Cherry J.M."/>
        </authorList>
    </citation>
    <scope>GENOME REANNOTATION</scope>
    <source>
        <strain>ATCC 204508 / S288c</strain>
    </source>
</reference>
<organism>
    <name type="scientific">Saccharomyces cerevisiae (strain ATCC 204508 / S288c)</name>
    <name type="common">Baker's yeast</name>
    <dbReference type="NCBI Taxonomy" id="559292"/>
    <lineage>
        <taxon>Eukaryota</taxon>
        <taxon>Fungi</taxon>
        <taxon>Dikarya</taxon>
        <taxon>Ascomycota</taxon>
        <taxon>Saccharomycotina</taxon>
        <taxon>Saccharomycetes</taxon>
        <taxon>Saccharomycetales</taxon>
        <taxon>Saccharomycetaceae</taxon>
        <taxon>Saccharomyces</taxon>
    </lineage>
</organism>
<evidence type="ECO:0000256" key="1">
    <source>
        <dbReference type="SAM" id="MobiDB-lite"/>
    </source>
</evidence>
<evidence type="ECO:0000305" key="2"/>
<evidence type="ECO:0000305" key="3">
    <source>
    </source>
</evidence>
<sequence length="167" mass="19222">MTSFQAVSFALGCNTLVACYAFTVLEKRSLMTSCTNALSFLFFLLTLRRIHRHWYKPYGAFLLIFVLTLRWFRGPIAWVVVDVVFASCNVVFFSPALSDENWPYVSFFGVVVVIAVHIIVVTHIGAFTACCLLKRVSLKSSEEKKKKKKKKKEKSLHTEREKKKKKF</sequence>
<dbReference type="EMBL" id="Z28265">
    <property type="protein sequence ID" value="CAA82114.1"/>
    <property type="molecule type" value="Genomic_DNA"/>
</dbReference>
<dbReference type="EMBL" id="Z28266">
    <property type="protein sequence ID" value="CAA82117.1"/>
    <property type="molecule type" value="Genomic_DNA"/>
</dbReference>
<dbReference type="PIR" id="S38112">
    <property type="entry name" value="S38112"/>
</dbReference>
<dbReference type="DIP" id="DIP-5088N"/>
<dbReference type="STRING" id="4932.YKR040C"/>
<dbReference type="PaxDb" id="4932-YKR040C"/>
<dbReference type="EnsemblFungi" id="YKR040C_mRNA">
    <property type="protein sequence ID" value="YKR040C"/>
    <property type="gene ID" value="YKR040C"/>
</dbReference>
<dbReference type="AGR" id="SGD:S000001748"/>
<dbReference type="SGD" id="S000001748">
    <property type="gene designation" value="YKR040C"/>
</dbReference>
<dbReference type="HOGENOM" id="CLU_1595850_0_0_1"/>
<dbReference type="InterPro" id="IPR056230">
    <property type="entry name" value="TMEM62_C"/>
</dbReference>
<dbReference type="Pfam" id="PF24394">
    <property type="entry name" value="TMEM62_C"/>
    <property type="match status" value="1"/>
</dbReference>
<comment type="miscellaneous">
    <text evidence="2">Partially overlaps YKR041W.</text>
</comment>
<comment type="caution">
    <text evidence="3">Product of a dubious gene prediction unlikely to encode a functional protein. Because of that it is not part of the S.cerevisiae S288c complete/reference proteome set.</text>
</comment>
<gene>
    <name type="ordered locus">YKR040C</name>
</gene>